<protein>
    <recommendedName>
        <fullName evidence="1">UPF0597 protein KPN78578_43500</fullName>
    </recommendedName>
</protein>
<proteinExistence type="inferred from homology"/>
<evidence type="ECO:0000255" key="1">
    <source>
        <dbReference type="HAMAP-Rule" id="MF_01845"/>
    </source>
</evidence>
<sequence>MNTDNASLYVKWLKQEVAPALGCTEPVAISFAAAYAAQYLDQPCTKISGFISANLYKNAMGVTIPGTTVCGVPLAAAIGAFGGDPQKGLKTLEDITPQHVEMAQKLIANNAVDIAVEETPDFIHLDLTLSAGDNCCRVVVKGTHTNVVELYINGQPQPLSEKQNTRTQRETLPTFSLQQAYDFINRVDFNDIRFILDAARLNSALAAEGKTKKYGLNINGTFSDAVKNGLMSNDLLSKVIINTVAASDARMGGAPVVAMSNFGSGNQGITATMPVVVVAEHLGVDEETLARALSLSHLTAISIHSRYTRLSALCAASTAAMGAAAGMAWLFTRDINTINTAIINMISDITGMICDGASNSCAMKVSSVVSSAFKAVLMAMQNSCAGANDGIVCADVEQTINNLCRLVIKPMTLTDKEIISIMVAK</sequence>
<organism>
    <name type="scientific">Klebsiella pneumoniae subsp. pneumoniae (strain ATCC 700721 / MGH 78578)</name>
    <dbReference type="NCBI Taxonomy" id="272620"/>
    <lineage>
        <taxon>Bacteria</taxon>
        <taxon>Pseudomonadati</taxon>
        <taxon>Pseudomonadota</taxon>
        <taxon>Gammaproteobacteria</taxon>
        <taxon>Enterobacterales</taxon>
        <taxon>Enterobacteriaceae</taxon>
        <taxon>Klebsiella/Raoultella group</taxon>
        <taxon>Klebsiella</taxon>
        <taxon>Klebsiella pneumoniae complex</taxon>
    </lineage>
</organism>
<gene>
    <name type="ordered locus">KPN78578_43500</name>
    <name type="ORF">KPN_04419</name>
</gene>
<feature type="chain" id="PRO_0000339831" description="UPF0597 protein KPN78578_43500">
    <location>
        <begin position="1"/>
        <end position="425"/>
    </location>
</feature>
<accession>A6TGU0</accession>
<dbReference type="EMBL" id="CP000647">
    <property type="protein sequence ID" value="ABR79774.1"/>
    <property type="molecule type" value="Genomic_DNA"/>
</dbReference>
<dbReference type="RefSeq" id="WP_015959255.1">
    <property type="nucleotide sequence ID" value="NC_009648.1"/>
</dbReference>
<dbReference type="STRING" id="272620.KPN_04419"/>
<dbReference type="PaxDb" id="272620-KPN_04419"/>
<dbReference type="EnsemblBacteria" id="ABR79774">
    <property type="protein sequence ID" value="ABR79774"/>
    <property type="gene ID" value="KPN_04419"/>
</dbReference>
<dbReference type="KEGG" id="kpn:KPN_04419"/>
<dbReference type="HOGENOM" id="CLU_051840_0_0_6"/>
<dbReference type="Proteomes" id="UP000000265">
    <property type="component" value="Chromosome"/>
</dbReference>
<dbReference type="GO" id="GO:0080146">
    <property type="term" value="F:L-cysteine desulfhydrase activity"/>
    <property type="evidence" value="ECO:0007669"/>
    <property type="project" value="TreeGrafter"/>
</dbReference>
<dbReference type="GO" id="GO:0019450">
    <property type="term" value="P:L-cysteine catabolic process to pyruvate"/>
    <property type="evidence" value="ECO:0007669"/>
    <property type="project" value="TreeGrafter"/>
</dbReference>
<dbReference type="HAMAP" id="MF_01845">
    <property type="entry name" value="UPF0597"/>
    <property type="match status" value="1"/>
</dbReference>
<dbReference type="InterPro" id="IPR005130">
    <property type="entry name" value="Ser_deHydtase-like_asu"/>
</dbReference>
<dbReference type="InterPro" id="IPR021144">
    <property type="entry name" value="UPF0597"/>
</dbReference>
<dbReference type="PANTHER" id="PTHR30501">
    <property type="entry name" value="UPF0597 PROTEIN YHAM"/>
    <property type="match status" value="1"/>
</dbReference>
<dbReference type="PANTHER" id="PTHR30501:SF2">
    <property type="entry name" value="UPF0597 PROTEIN YHAM"/>
    <property type="match status" value="1"/>
</dbReference>
<dbReference type="Pfam" id="PF03313">
    <property type="entry name" value="SDH_alpha"/>
    <property type="match status" value="1"/>
</dbReference>
<dbReference type="PIRSF" id="PIRSF006054">
    <property type="entry name" value="UCP006054"/>
    <property type="match status" value="1"/>
</dbReference>
<reference key="1">
    <citation type="submission" date="2006-09" db="EMBL/GenBank/DDBJ databases">
        <authorList>
            <consortium name="The Klebsiella pneumonia Genome Sequencing Project"/>
            <person name="McClelland M."/>
            <person name="Sanderson E.K."/>
            <person name="Spieth J."/>
            <person name="Clifton W.S."/>
            <person name="Latreille P."/>
            <person name="Sabo A."/>
            <person name="Pepin K."/>
            <person name="Bhonagiri V."/>
            <person name="Porwollik S."/>
            <person name="Ali J."/>
            <person name="Wilson R.K."/>
        </authorList>
    </citation>
    <scope>NUCLEOTIDE SEQUENCE [LARGE SCALE GENOMIC DNA]</scope>
    <source>
        <strain>ATCC 700721 / MGH 78578</strain>
    </source>
</reference>
<comment type="similarity">
    <text evidence="1">Belongs to the UPF0597 family.</text>
</comment>
<name>Y4350_KLEP7</name>